<name>SIGS_STAA2</name>
<proteinExistence type="inferred from homology"/>
<gene>
    <name type="primary">sigS</name>
    <name type="ordered locus">SaurJH1_1864</name>
</gene>
<comment type="function">
    <text evidence="1">Sigma factors are initiation factors that promote the attachment of RNA polymerase to specific initiation sites and are then released. Sigma-S contributes to the protection against external stress, thus playing a role in cellular fitness and survival (By similarity).</text>
</comment>
<comment type="similarity">
    <text evidence="2">Belongs to the sigma-70 factor family.</text>
</comment>
<comment type="sequence caution" evidence="2">
    <conflict type="erroneous initiation">
        <sequence resource="EMBL-CDS" id="ABR52708"/>
    </conflict>
</comment>
<evidence type="ECO:0000250" key="1"/>
<evidence type="ECO:0000305" key="2"/>
<protein>
    <recommendedName>
        <fullName>RNA polymerase sigma factor SigS</fullName>
    </recommendedName>
</protein>
<dbReference type="EMBL" id="CP000736">
    <property type="protein sequence ID" value="ABR52708.1"/>
    <property type="status" value="ALT_INIT"/>
    <property type="molecule type" value="Genomic_DNA"/>
</dbReference>
<dbReference type="SMR" id="A6U2P0"/>
<dbReference type="KEGG" id="sah:SaurJH1_1864"/>
<dbReference type="HOGENOM" id="CLU_047691_20_2_9"/>
<dbReference type="GO" id="GO:0003677">
    <property type="term" value="F:DNA binding"/>
    <property type="evidence" value="ECO:0007669"/>
    <property type="project" value="UniProtKB-KW"/>
</dbReference>
<dbReference type="GO" id="GO:0016987">
    <property type="term" value="F:sigma factor activity"/>
    <property type="evidence" value="ECO:0007669"/>
    <property type="project" value="UniProtKB-KW"/>
</dbReference>
<dbReference type="GO" id="GO:0006352">
    <property type="term" value="P:DNA-templated transcription initiation"/>
    <property type="evidence" value="ECO:0007669"/>
    <property type="project" value="InterPro"/>
</dbReference>
<dbReference type="Gene3D" id="1.10.10.10">
    <property type="entry name" value="Winged helix-like DNA-binding domain superfamily/Winged helix DNA-binding domain"/>
    <property type="match status" value="1"/>
</dbReference>
<dbReference type="InterPro" id="IPR014284">
    <property type="entry name" value="RNA_pol_sigma-70_dom"/>
</dbReference>
<dbReference type="InterPro" id="IPR007627">
    <property type="entry name" value="RNA_pol_sigma70_r2"/>
</dbReference>
<dbReference type="InterPro" id="IPR013325">
    <property type="entry name" value="RNA_pol_sigma_r2"/>
</dbReference>
<dbReference type="InterPro" id="IPR016032">
    <property type="entry name" value="Sig_transdc_resp-reg_C-effctor"/>
</dbReference>
<dbReference type="InterPro" id="IPR036388">
    <property type="entry name" value="WH-like_DNA-bd_sf"/>
</dbReference>
<dbReference type="NCBIfam" id="TIGR02937">
    <property type="entry name" value="sigma70-ECF"/>
    <property type="match status" value="1"/>
</dbReference>
<dbReference type="Pfam" id="PF04542">
    <property type="entry name" value="Sigma70_r2"/>
    <property type="match status" value="1"/>
</dbReference>
<dbReference type="SUPFAM" id="SSF46894">
    <property type="entry name" value="C-terminal effector domain of the bipartite response regulators"/>
    <property type="match status" value="1"/>
</dbReference>
<dbReference type="SUPFAM" id="SSF88946">
    <property type="entry name" value="Sigma2 domain of RNA polymerase sigma factors"/>
    <property type="match status" value="1"/>
</dbReference>
<feature type="chain" id="PRO_0000367446" description="RNA polymerase sigma factor SigS">
    <location>
        <begin position="1"/>
        <end position="156"/>
    </location>
</feature>
<feature type="DNA-binding region" description="H-T-H motif" evidence="1">
    <location>
        <begin position="126"/>
        <end position="145"/>
    </location>
</feature>
<feature type="short sequence motif" description="Polymerase core binding">
    <location>
        <begin position="29"/>
        <end position="44"/>
    </location>
</feature>
<keyword id="KW-0238">DNA-binding</keyword>
<keyword id="KW-0731">Sigma factor</keyword>
<keyword id="KW-0804">Transcription</keyword>
<keyword id="KW-0805">Transcription regulation</keyword>
<organism>
    <name type="scientific">Staphylococcus aureus (strain JH1)</name>
    <dbReference type="NCBI Taxonomy" id="359787"/>
    <lineage>
        <taxon>Bacteria</taxon>
        <taxon>Bacillati</taxon>
        <taxon>Bacillota</taxon>
        <taxon>Bacilli</taxon>
        <taxon>Bacillales</taxon>
        <taxon>Staphylococcaceae</taxon>
        <taxon>Staphylococcus</taxon>
    </lineage>
</organism>
<accession>A6U2P0</accession>
<sequence length="156" mass="19161">MKFNDVYNKHHKIIHHLLKKYNISYNYDEYYQLLLIKMWQLSQIYKPSSKQSLSSFLFTRLNYYLIDLFRQQNQLKDVILCENNSPTLTEQPTYFNEHDLRLQDIFKLLNHRERLWLKLYLEGYKQFEIAEIMSLSLSTIKLIKMSVKRKCQHNFN</sequence>
<reference key="1">
    <citation type="submission" date="2007-06" db="EMBL/GenBank/DDBJ databases">
        <title>Complete sequence of chromosome of Staphylococcus aureus subsp. aureus JH1.</title>
        <authorList>
            <consortium name="US DOE Joint Genome Institute"/>
            <person name="Copeland A."/>
            <person name="Lucas S."/>
            <person name="Lapidus A."/>
            <person name="Barry K."/>
            <person name="Detter J.C."/>
            <person name="Glavina del Rio T."/>
            <person name="Hammon N."/>
            <person name="Israni S."/>
            <person name="Dalin E."/>
            <person name="Tice H."/>
            <person name="Pitluck S."/>
            <person name="Chain P."/>
            <person name="Malfatti S."/>
            <person name="Shin M."/>
            <person name="Vergez L."/>
            <person name="Schmutz J."/>
            <person name="Larimer F."/>
            <person name="Land M."/>
            <person name="Hauser L."/>
            <person name="Kyrpides N."/>
            <person name="Ivanova N."/>
            <person name="Tomasz A."/>
            <person name="Richardson P."/>
        </authorList>
    </citation>
    <scope>NUCLEOTIDE SEQUENCE [LARGE SCALE GENOMIC DNA]</scope>
    <source>
        <strain>JH1</strain>
    </source>
</reference>